<comment type="function">
    <text evidence="1">Activates the ATG1 kinase in a nutritional condition dependent manner through the TOR pathway, leading to autophagy. Also involved in cytoplasm to vacuole transport (Cvt) and more specifically in Cvt vesicle formation. Seems to play a role in the switching machinery regulating the conversion between the Cvt pathway and autophagy. Finally, ATG13 is also required for glycogen storage during stationary phase (By similarity).</text>
</comment>
<comment type="subunit">
    <text evidence="1">Interacts with ATG1 to form the ATG1-ATG13 kinase complex.</text>
</comment>
<comment type="subcellular location">
    <subcellularLocation>
        <location evidence="2">Cytoplasm</location>
    </subcellularLocation>
    <subcellularLocation>
        <location evidence="2">Preautophagosomal structure</location>
    </subcellularLocation>
</comment>
<comment type="similarity">
    <text evidence="4">Belongs to the ATG13 family. Fungi subfamily.</text>
</comment>
<keyword id="KW-0072">Autophagy</keyword>
<keyword id="KW-0963">Cytoplasm</keyword>
<keyword id="KW-0653">Protein transport</keyword>
<keyword id="KW-1185">Reference proteome</keyword>
<keyword id="KW-0813">Transport</keyword>
<accession>Q6FSJ9</accession>
<name>ATG13_CANGA</name>
<gene>
    <name type="primary">ATG13</name>
    <name type="ordered locus">CAGL0G09999g</name>
</gene>
<dbReference type="EMBL" id="CR380953">
    <property type="protein sequence ID" value="CAG59722.1"/>
    <property type="molecule type" value="Genomic_DNA"/>
</dbReference>
<dbReference type="RefSeq" id="XP_446795.1">
    <property type="nucleotide sequence ID" value="XM_446795.1"/>
</dbReference>
<dbReference type="SMR" id="Q6FSJ9"/>
<dbReference type="FunCoup" id="Q6FSJ9">
    <property type="interactions" value="48"/>
</dbReference>
<dbReference type="STRING" id="284593.Q6FSJ9"/>
<dbReference type="EnsemblFungi" id="CAGL0G09999g-T">
    <property type="protein sequence ID" value="CAGL0G09999g-T-p1"/>
    <property type="gene ID" value="CAGL0G09999g"/>
</dbReference>
<dbReference type="KEGG" id="cgr:2888156"/>
<dbReference type="CGD" id="CAL0129383">
    <property type="gene designation" value="CAGL0G09999g"/>
</dbReference>
<dbReference type="VEuPathDB" id="FungiDB:CAGL0G09999g"/>
<dbReference type="eggNOG" id="KOG4573">
    <property type="taxonomic scope" value="Eukaryota"/>
</dbReference>
<dbReference type="HOGENOM" id="CLU_411076_0_0_1"/>
<dbReference type="InParanoid" id="Q6FSJ9"/>
<dbReference type="Proteomes" id="UP000002428">
    <property type="component" value="Chromosome G"/>
</dbReference>
<dbReference type="GO" id="GO:1990316">
    <property type="term" value="C:Atg1/ULK1 kinase complex"/>
    <property type="evidence" value="ECO:0007669"/>
    <property type="project" value="EnsemblFungi"/>
</dbReference>
<dbReference type="GO" id="GO:0005829">
    <property type="term" value="C:cytosol"/>
    <property type="evidence" value="ECO:0007669"/>
    <property type="project" value="TreeGrafter"/>
</dbReference>
<dbReference type="GO" id="GO:0070772">
    <property type="term" value="C:PAS complex"/>
    <property type="evidence" value="ECO:0007669"/>
    <property type="project" value="EnsemblFungi"/>
</dbReference>
<dbReference type="GO" id="GO:0000407">
    <property type="term" value="C:phagophore assembly site"/>
    <property type="evidence" value="ECO:0007669"/>
    <property type="project" value="UniProtKB-SubCell"/>
</dbReference>
<dbReference type="GO" id="GO:0120095">
    <property type="term" value="C:vacuole-isolation membrane contact site"/>
    <property type="evidence" value="ECO:0007669"/>
    <property type="project" value="EnsemblFungi"/>
</dbReference>
<dbReference type="GO" id="GO:0070016">
    <property type="term" value="F:armadillo repeat domain binding"/>
    <property type="evidence" value="ECO:0007669"/>
    <property type="project" value="EnsemblFungi"/>
</dbReference>
<dbReference type="GO" id="GO:0008289">
    <property type="term" value="F:lipid binding"/>
    <property type="evidence" value="ECO:0007669"/>
    <property type="project" value="EnsemblFungi"/>
</dbReference>
<dbReference type="GO" id="GO:0019887">
    <property type="term" value="F:protein kinase regulator activity"/>
    <property type="evidence" value="ECO:0007669"/>
    <property type="project" value="EnsemblFungi"/>
</dbReference>
<dbReference type="GO" id="GO:0006995">
    <property type="term" value="P:cellular response to nitrogen starvation"/>
    <property type="evidence" value="ECO:0007669"/>
    <property type="project" value="EnsemblFungi"/>
</dbReference>
<dbReference type="GO" id="GO:0071255">
    <property type="term" value="P:Cvt vesicle assembly"/>
    <property type="evidence" value="ECO:0007669"/>
    <property type="project" value="EnsemblFungi"/>
</dbReference>
<dbReference type="GO" id="GO:0000423">
    <property type="term" value="P:mitophagy"/>
    <property type="evidence" value="ECO:0007669"/>
    <property type="project" value="TreeGrafter"/>
</dbReference>
<dbReference type="GO" id="GO:0034727">
    <property type="term" value="P:piecemeal microautophagy of the nucleus"/>
    <property type="evidence" value="ECO:0007669"/>
    <property type="project" value="EnsemblFungi"/>
</dbReference>
<dbReference type="GO" id="GO:0010508">
    <property type="term" value="P:positive regulation of autophagy"/>
    <property type="evidence" value="ECO:0007669"/>
    <property type="project" value="EnsemblFungi"/>
</dbReference>
<dbReference type="GO" id="GO:0034497">
    <property type="term" value="P:protein localization to phagophore assembly site"/>
    <property type="evidence" value="ECO:0007669"/>
    <property type="project" value="EnsemblFungi"/>
</dbReference>
<dbReference type="GO" id="GO:0071211">
    <property type="term" value="P:protein targeting to vacuole involved in autophagy"/>
    <property type="evidence" value="ECO:0007669"/>
    <property type="project" value="EnsemblFungi"/>
</dbReference>
<dbReference type="GO" id="GO:0060341">
    <property type="term" value="P:regulation of cellular localization"/>
    <property type="evidence" value="ECO:0007669"/>
    <property type="project" value="EnsemblFungi"/>
</dbReference>
<dbReference type="Gene3D" id="6.10.140.1900">
    <property type="match status" value="1"/>
</dbReference>
<dbReference type="Gene3D" id="3.30.900.10">
    <property type="entry name" value="HORMA domain"/>
    <property type="match status" value="1"/>
</dbReference>
<dbReference type="InterPro" id="IPR040182">
    <property type="entry name" value="ATG13"/>
</dbReference>
<dbReference type="InterPro" id="IPR018731">
    <property type="entry name" value="Atg13_N"/>
</dbReference>
<dbReference type="InterPro" id="IPR036570">
    <property type="entry name" value="HORMA_dom_sf"/>
</dbReference>
<dbReference type="PANTHER" id="PTHR13430">
    <property type="match status" value="1"/>
</dbReference>
<dbReference type="PANTHER" id="PTHR13430:SF4">
    <property type="entry name" value="AUTOPHAGY-RELATED PROTEIN 13"/>
    <property type="match status" value="1"/>
</dbReference>
<dbReference type="Pfam" id="PF10033">
    <property type="entry name" value="ATG13"/>
    <property type="match status" value="1"/>
</dbReference>
<organism>
    <name type="scientific">Candida glabrata (strain ATCC 2001 / BCRC 20586 / JCM 3761 / NBRC 0622 / NRRL Y-65 / CBS 138)</name>
    <name type="common">Yeast</name>
    <name type="synonym">Nakaseomyces glabratus</name>
    <dbReference type="NCBI Taxonomy" id="284593"/>
    <lineage>
        <taxon>Eukaryota</taxon>
        <taxon>Fungi</taxon>
        <taxon>Dikarya</taxon>
        <taxon>Ascomycota</taxon>
        <taxon>Saccharomycotina</taxon>
        <taxon>Saccharomycetes</taxon>
        <taxon>Saccharomycetales</taxon>
        <taxon>Saccharomycetaceae</taxon>
        <taxon>Nakaseomyces</taxon>
    </lineage>
</organism>
<protein>
    <recommendedName>
        <fullName>Autophagy-related protein 13</fullName>
    </recommendedName>
</protein>
<proteinExistence type="inferred from homology"/>
<reference key="1">
    <citation type="journal article" date="2004" name="Nature">
        <title>Genome evolution in yeasts.</title>
        <authorList>
            <person name="Dujon B."/>
            <person name="Sherman D."/>
            <person name="Fischer G."/>
            <person name="Durrens P."/>
            <person name="Casaregola S."/>
            <person name="Lafontaine I."/>
            <person name="de Montigny J."/>
            <person name="Marck C."/>
            <person name="Neuveglise C."/>
            <person name="Talla E."/>
            <person name="Goffard N."/>
            <person name="Frangeul L."/>
            <person name="Aigle M."/>
            <person name="Anthouard V."/>
            <person name="Babour A."/>
            <person name="Barbe V."/>
            <person name="Barnay S."/>
            <person name="Blanchin S."/>
            <person name="Beckerich J.-M."/>
            <person name="Beyne E."/>
            <person name="Bleykasten C."/>
            <person name="Boisrame A."/>
            <person name="Boyer J."/>
            <person name="Cattolico L."/>
            <person name="Confanioleri F."/>
            <person name="de Daruvar A."/>
            <person name="Despons L."/>
            <person name="Fabre E."/>
            <person name="Fairhead C."/>
            <person name="Ferry-Dumazet H."/>
            <person name="Groppi A."/>
            <person name="Hantraye F."/>
            <person name="Hennequin C."/>
            <person name="Jauniaux N."/>
            <person name="Joyet P."/>
            <person name="Kachouri R."/>
            <person name="Kerrest A."/>
            <person name="Koszul R."/>
            <person name="Lemaire M."/>
            <person name="Lesur I."/>
            <person name="Ma L."/>
            <person name="Muller H."/>
            <person name="Nicaud J.-M."/>
            <person name="Nikolski M."/>
            <person name="Oztas S."/>
            <person name="Ozier-Kalogeropoulos O."/>
            <person name="Pellenz S."/>
            <person name="Potier S."/>
            <person name="Richard G.-F."/>
            <person name="Straub M.-L."/>
            <person name="Suleau A."/>
            <person name="Swennen D."/>
            <person name="Tekaia F."/>
            <person name="Wesolowski-Louvel M."/>
            <person name="Westhof E."/>
            <person name="Wirth B."/>
            <person name="Zeniou-Meyer M."/>
            <person name="Zivanovic Y."/>
            <person name="Bolotin-Fukuhara M."/>
            <person name="Thierry A."/>
            <person name="Bouchier C."/>
            <person name="Caudron B."/>
            <person name="Scarpelli C."/>
            <person name="Gaillardin C."/>
            <person name="Weissenbach J."/>
            <person name="Wincker P."/>
            <person name="Souciet J.-L."/>
        </authorList>
    </citation>
    <scope>NUCLEOTIDE SEQUENCE [LARGE SCALE GENOMIC DNA]</scope>
    <source>
        <strain>ATCC 2001 / BCRC 20586 / JCM 3761 / NBRC 0622 / NRRL Y-65 / CBS 138</strain>
    </source>
</reference>
<evidence type="ECO:0000250" key="1"/>
<evidence type="ECO:0000250" key="2">
    <source>
        <dbReference type="UniProtKB" id="Q06628"/>
    </source>
</evidence>
<evidence type="ECO:0000256" key="3">
    <source>
        <dbReference type="SAM" id="MobiDB-lite"/>
    </source>
</evidence>
<evidence type="ECO:0000305" key="4"/>
<feature type="chain" id="PRO_0000157967" description="Autophagy-related protein 13">
    <location>
        <begin position="1"/>
        <end position="660"/>
    </location>
</feature>
<feature type="region of interest" description="Disordered" evidence="3">
    <location>
        <begin position="315"/>
        <end position="369"/>
    </location>
</feature>
<feature type="region of interest" description="Disordered" evidence="3">
    <location>
        <begin position="467"/>
        <end position="516"/>
    </location>
</feature>
<feature type="region of interest" description="Disordered" evidence="3">
    <location>
        <begin position="572"/>
        <end position="597"/>
    </location>
</feature>
<feature type="compositionally biased region" description="Low complexity" evidence="3">
    <location>
        <begin position="321"/>
        <end position="335"/>
    </location>
</feature>
<feature type="compositionally biased region" description="Polar residues" evidence="3">
    <location>
        <begin position="349"/>
        <end position="369"/>
    </location>
</feature>
<feature type="compositionally biased region" description="Low complexity" evidence="3">
    <location>
        <begin position="470"/>
        <end position="479"/>
    </location>
</feature>
<feature type="compositionally biased region" description="Polar residues" evidence="3">
    <location>
        <begin position="480"/>
        <end position="498"/>
    </location>
</feature>
<feature type="compositionally biased region" description="Low complexity" evidence="3">
    <location>
        <begin position="504"/>
        <end position="515"/>
    </location>
</feature>
<feature type="compositionally biased region" description="Polar residues" evidence="3">
    <location>
        <begin position="574"/>
        <end position="597"/>
    </location>
</feature>
<sequence length="660" mass="74347">MSNGNDNQVIELIQNFFLKSAGLVTTVESNRYSLDDTSIEFDDEWFDMNIDVLHDLPPIIDKWTNFDGTQELPPLVIETFLDLHLLPSSYTVRLRDDESHLWAVSKGNKKSEIVLERWLIELDKESTSFKNHVQSGSGVSPEKLDQQLRLLFRYLFTLLQLLPSNDLMMALNNQSESHNTPIPVDIKTRILDGSQPILSKGRIGLSRPIISSYSNIINNSNIPAHLEQKKITPVWTKYGLLRISVSYRRDCQFIFQDLNEDNSPNTQITNQPAKTNEISISLSPRSKNDLNQISHPSWQKKFISSSKQFQPFIVGSVGSANTPNQNSSRNPSNSSVVGPHYHPQHRLSIGSSTSVSTQPNYEGTSVGSTSKFASSFNNLRRHSSVRYHESTEKLAKTDKNNYEDTDDLMEFVRLIEAKPELQPKKGLSGLQDKNLSGSILRYQKLRPSNDMLSEDLALSVSIDPIHGSQRRNSNSHSHSPVASFSPSGHFSSINSKLSQPHLAVRGSSSTVNSRRNSVDKVLASALSPIYGGDIPEYHTKSHNPVFNEVDDEEEGNDDLLVNKIPININKHKMSTSPRSIDSISNSLTRNRTPFRQPYQYSQPTTIATQAYAKMHRPTVRSSDAISEINSRKGDNFHQLINDNDEDDLVFFMSDMNLPRE</sequence>